<sequence>MQGVSRTSLTEVIRRLDDILPSANTATLGHELFEVVALLDQEHSLRRWLADPAGSPDSKSELVNSLLETKVSPATLLVVSDVVRAQWSRPRDLVDAVEQAAVLATVAEHASARELEGVEDELFRFGRIVAGQPELRAALTTDGASIEHKRTLVENLLSGKVSTATLTLVTEAVTRPRGRTLEQGLEHFSQLVAERAKHYIAVVRAAVPLSEAQQSRLQAALTRIYGRDIHLNIEITPEIVGGLSIRVGDEVIDGTIAGRIAEVRRRLAG</sequence>
<accession>Q47M79</accession>
<reference key="1">
    <citation type="journal article" date="2007" name="J. Bacteriol.">
        <title>Genome sequence and analysis of the soil cellulolytic actinomycete Thermobifida fusca YX.</title>
        <authorList>
            <person name="Lykidis A."/>
            <person name="Mavromatis K."/>
            <person name="Ivanova N."/>
            <person name="Anderson I."/>
            <person name="Land M."/>
            <person name="DiBartolo G."/>
            <person name="Martinez M."/>
            <person name="Lapidus A."/>
            <person name="Lucas S."/>
            <person name="Copeland A."/>
            <person name="Richardson P."/>
            <person name="Wilson D.B."/>
            <person name="Kyrpides N."/>
        </authorList>
    </citation>
    <scope>NUCLEOTIDE SEQUENCE [LARGE SCALE GENOMIC DNA]</scope>
    <source>
        <strain>YX</strain>
    </source>
</reference>
<dbReference type="EMBL" id="CP000088">
    <property type="protein sequence ID" value="AAZ56443.1"/>
    <property type="molecule type" value="Genomic_DNA"/>
</dbReference>
<dbReference type="RefSeq" id="WP_011292833.1">
    <property type="nucleotide sequence ID" value="NC_007333.1"/>
</dbReference>
<dbReference type="SMR" id="Q47M79"/>
<dbReference type="STRING" id="269800.Tfu_2410"/>
<dbReference type="KEGG" id="tfu:Tfu_2410"/>
<dbReference type="eggNOG" id="COG0712">
    <property type="taxonomic scope" value="Bacteria"/>
</dbReference>
<dbReference type="HOGENOM" id="CLU_088880_0_0_11"/>
<dbReference type="OrthoDB" id="5242917at2"/>
<dbReference type="GO" id="GO:0005886">
    <property type="term" value="C:plasma membrane"/>
    <property type="evidence" value="ECO:0007669"/>
    <property type="project" value="UniProtKB-SubCell"/>
</dbReference>
<dbReference type="GO" id="GO:0045259">
    <property type="term" value="C:proton-transporting ATP synthase complex"/>
    <property type="evidence" value="ECO:0007669"/>
    <property type="project" value="UniProtKB-KW"/>
</dbReference>
<dbReference type="GO" id="GO:0046933">
    <property type="term" value="F:proton-transporting ATP synthase activity, rotational mechanism"/>
    <property type="evidence" value="ECO:0007669"/>
    <property type="project" value="UniProtKB-UniRule"/>
</dbReference>
<dbReference type="HAMAP" id="MF_01416">
    <property type="entry name" value="ATP_synth_delta_bact"/>
    <property type="match status" value="1"/>
</dbReference>
<dbReference type="InterPro" id="IPR000711">
    <property type="entry name" value="ATPase_OSCP/dsu"/>
</dbReference>
<dbReference type="NCBIfam" id="TIGR01145">
    <property type="entry name" value="ATP_synt_delta"/>
    <property type="match status" value="1"/>
</dbReference>
<dbReference type="NCBIfam" id="NF009967">
    <property type="entry name" value="PRK13430.1"/>
    <property type="match status" value="1"/>
</dbReference>
<dbReference type="PANTHER" id="PTHR11910">
    <property type="entry name" value="ATP SYNTHASE DELTA CHAIN"/>
    <property type="match status" value="1"/>
</dbReference>
<dbReference type="Pfam" id="PF00213">
    <property type="entry name" value="OSCP"/>
    <property type="match status" value="1"/>
</dbReference>
<organism>
    <name type="scientific">Thermobifida fusca (strain YX)</name>
    <dbReference type="NCBI Taxonomy" id="269800"/>
    <lineage>
        <taxon>Bacteria</taxon>
        <taxon>Bacillati</taxon>
        <taxon>Actinomycetota</taxon>
        <taxon>Actinomycetes</taxon>
        <taxon>Streptosporangiales</taxon>
        <taxon>Nocardiopsidaceae</taxon>
        <taxon>Thermobifida</taxon>
    </lineage>
</organism>
<feature type="chain" id="PRO_0000371184" description="ATP synthase subunit delta">
    <location>
        <begin position="1"/>
        <end position="269"/>
    </location>
</feature>
<comment type="function">
    <text evidence="1">F(1)F(0) ATP synthase produces ATP from ADP in the presence of a proton or sodium gradient. F-type ATPases consist of two structural domains, F(1) containing the extramembraneous catalytic core and F(0) containing the membrane proton channel, linked together by a central stalk and a peripheral stalk. During catalysis, ATP synthesis in the catalytic domain of F(1) is coupled via a rotary mechanism of the central stalk subunits to proton translocation.</text>
</comment>
<comment type="function">
    <text evidence="1">This protein is part of the stalk that links CF(0) to CF(1). It either transmits conformational changes from CF(0) to CF(1) or is implicated in proton conduction.</text>
</comment>
<comment type="subunit">
    <text evidence="1">F-type ATPases have 2 components, F(1) - the catalytic core - and F(0) - the membrane proton channel. F(1) has five subunits: alpha(3), beta(3), gamma(1), delta(1), epsilon(1). F(0) has three main subunits: a(1), b(2) and c(10-14). The alpha and beta chains form an alternating ring which encloses part of the gamma chain. F(1) is attached to F(0) by a central stalk formed by the gamma and epsilon chains, while a peripheral stalk is formed by the delta and b chains.</text>
</comment>
<comment type="subcellular location">
    <subcellularLocation>
        <location evidence="1">Cell membrane</location>
        <topology evidence="1">Peripheral membrane protein</topology>
    </subcellularLocation>
</comment>
<comment type="similarity">
    <text evidence="1">Belongs to the ATPase delta chain family.</text>
</comment>
<protein>
    <recommendedName>
        <fullName evidence="1">ATP synthase subunit delta</fullName>
    </recommendedName>
    <alternativeName>
        <fullName evidence="1">ATP synthase F(1) sector subunit delta</fullName>
    </alternativeName>
    <alternativeName>
        <fullName evidence="1">F-type ATPase subunit delta</fullName>
        <shortName evidence="1">F-ATPase subunit delta</shortName>
    </alternativeName>
</protein>
<name>ATPD_THEFY</name>
<keyword id="KW-0066">ATP synthesis</keyword>
<keyword id="KW-1003">Cell membrane</keyword>
<keyword id="KW-0139">CF(1)</keyword>
<keyword id="KW-0375">Hydrogen ion transport</keyword>
<keyword id="KW-0406">Ion transport</keyword>
<keyword id="KW-0472">Membrane</keyword>
<keyword id="KW-0813">Transport</keyword>
<evidence type="ECO:0000255" key="1">
    <source>
        <dbReference type="HAMAP-Rule" id="MF_01416"/>
    </source>
</evidence>
<gene>
    <name evidence="1" type="primary">atpH</name>
    <name type="ordered locus">Tfu_2410</name>
</gene>
<proteinExistence type="inferred from homology"/>